<comment type="function">
    <text evidence="3 4 5 6">Involved in maintenance of ploidy through proteasome dependent degradation of CDK inhibitor rum1 and S-phase initiator cdc18. Functions as a recognition factor for rum1 and cdc18, which are subsequently ubiquitinated and targeted to the 26S proteasome for degradation. Together with pop1, required for cig2 instability during G2 and M phase and cig2 degradation in exponentially growing cells.</text>
</comment>
<comment type="subunit">
    <text evidence="3 6">Homodimer and heterodimer with pop1. Binds to cul1, pip1 and phosphorylated cdc18.</text>
</comment>
<comment type="interaction">
    <interactant intactId="EBI-1185414">
        <id>O14170</id>
    </interactant>
    <interactant intactId="EBI-1207853">
        <id>P41411</id>
        <label>cdc18</label>
    </interactant>
    <organismsDiffer>false</organismsDiffer>
    <experiments>3</experiments>
</comment>
<comment type="interaction">
    <interactant intactId="EBI-1185414">
        <id>O14170</id>
    </interactant>
    <interactant intactId="EBI-1154807">
        <id>O13790</id>
        <label>cul1</label>
    </interactant>
    <organismsDiffer>false</organismsDiffer>
    <experiments>3</experiments>
</comment>
<comment type="interaction">
    <interactant intactId="EBI-1185414">
        <id>O14170</id>
    </interactant>
    <interactant intactId="EBI-1185389">
        <id>P87060</id>
        <label>pop1</label>
    </interactant>
    <organismsDiffer>false</organismsDiffer>
    <experiments>12</experiments>
</comment>
<comment type="interaction">
    <interactant intactId="EBI-1185414">
        <id>O14170</id>
    </interactant>
    <interactant intactId="EBI-1172248">
        <id>Q9Y709</id>
        <label>skp1</label>
    </interactant>
    <organismsDiffer>false</organismsDiffer>
    <experiments>3</experiments>
</comment>
<comment type="subcellular location">
    <subcellularLocation>
        <location evidence="3">Cytoplasm</location>
    </subcellularLocation>
    <subcellularLocation>
        <location evidence="3">Nucleus</location>
    </subcellularLocation>
</comment>
<gene>
    <name type="primary">pop2</name>
    <name type="synonym">sud1</name>
    <name type="ORF">SPAC4D7.03</name>
</gene>
<sequence length="703" mass="79605">MSLSRCPTDNSSSRINSSVPLINSSSPATPPESFDPQVFPSSLIHGDNLLPQDDQIASDPRSESNSCNGNTSSSLPCTDSYQYPLKHSCTPSFLRKFNESIENVSYKCLDHSPPDSVPGDFSISLVPQRNFLYSHSSLPPKIISIDRNNRIKLDNSISSNSDNFPPSPKVDTSNTVSPGSKPISEDLEDLNLQSIVQTFEDLPEGIQSYAFFQLLRSCNRQSMRLLLNECEPLLKKDILSNLPFSIVQSILLNLDIHSFLSCRLVSPTWNRILDVHTSYWKHMFSLFGFQINENDWKYANPNLNRPPFLHNDQISDDYFPEIFKRHFLNRKRWLFPSIPPSHLSFPIHVPNFMITSLLLHKDRIITTSGSGTIQIHNAITGVLEARLEGHKEGVWAVKIHENTLVSGSIDKTVRVWNIEKAKCTHIFRGHISIIRCLEILVPSRLIRHGVEIVEPDQPYIVSGSRDHTLRVWKLPKNTDPPYLPDNTNSIDRWEKNPYFVHTLIGHTDSVRTISGYGDILVSGSYDSSIRIWRVSTGECLYHLRGHSLRIYSVLYEPERNICISGSMDKSIRVWDLSTGTCKYVLEGHDAFVTLLNVFQNRLISGSADSTIRIWDLNTGKPLMVLPSNSGYISSFVSDEHKIISGNDGSVKLWDVRTGKLLRFLLTDLTKIWHVDFDAMRCVAAVQRDDQAYLEVINFSGSRP</sequence>
<dbReference type="EMBL" id="AF038867">
    <property type="protein sequence ID" value="AAB95480.1"/>
    <property type="molecule type" value="mRNA"/>
</dbReference>
<dbReference type="EMBL" id="AF064515">
    <property type="protein sequence ID" value="AAC39496.1"/>
    <property type="molecule type" value="Genomic_DNA"/>
</dbReference>
<dbReference type="EMBL" id="CU329670">
    <property type="protein sequence ID" value="CAB11275.1"/>
    <property type="molecule type" value="Genomic_DNA"/>
</dbReference>
<dbReference type="PIR" id="T43557">
    <property type="entry name" value="T43557"/>
</dbReference>
<dbReference type="RefSeq" id="NP_594956.1">
    <property type="nucleotide sequence ID" value="NM_001020387.2"/>
</dbReference>
<dbReference type="SMR" id="O14170"/>
<dbReference type="BioGRID" id="279932">
    <property type="interactions" value="73"/>
</dbReference>
<dbReference type="FunCoup" id="O14170">
    <property type="interactions" value="142"/>
</dbReference>
<dbReference type="IntAct" id="O14170">
    <property type="interactions" value="6"/>
</dbReference>
<dbReference type="MINT" id="O14170"/>
<dbReference type="STRING" id="284812.O14170"/>
<dbReference type="iPTMnet" id="O14170"/>
<dbReference type="PaxDb" id="4896-SPAC4D7.03.1"/>
<dbReference type="EnsemblFungi" id="SPAC4D7.03.1">
    <property type="protein sequence ID" value="SPAC4D7.03.1:pep"/>
    <property type="gene ID" value="SPAC4D7.03"/>
</dbReference>
<dbReference type="GeneID" id="2543514"/>
<dbReference type="KEGG" id="spo:2543514"/>
<dbReference type="PomBase" id="SPAC4D7.03">
    <property type="gene designation" value="pop2"/>
</dbReference>
<dbReference type="VEuPathDB" id="FungiDB:SPAC4D7.03"/>
<dbReference type="eggNOG" id="KOG0274">
    <property type="taxonomic scope" value="Eukaryota"/>
</dbReference>
<dbReference type="HOGENOM" id="CLU_000288_103_3_1"/>
<dbReference type="InParanoid" id="O14170"/>
<dbReference type="OMA" id="KTTKIWF"/>
<dbReference type="PhylomeDB" id="O14170"/>
<dbReference type="PRO" id="PR:O14170"/>
<dbReference type="Proteomes" id="UP000002485">
    <property type="component" value="Chromosome I"/>
</dbReference>
<dbReference type="GO" id="GO:0005737">
    <property type="term" value="C:cytoplasm"/>
    <property type="evidence" value="ECO:0007669"/>
    <property type="project" value="UniProtKB-SubCell"/>
</dbReference>
<dbReference type="GO" id="GO:0043224">
    <property type="term" value="C:nuclear SCF ubiquitin ligase complex"/>
    <property type="evidence" value="ECO:0000266"/>
    <property type="project" value="PomBase"/>
</dbReference>
<dbReference type="GO" id="GO:0019005">
    <property type="term" value="C:SCF ubiquitin ligase complex"/>
    <property type="evidence" value="ECO:0000353"/>
    <property type="project" value="PomBase"/>
</dbReference>
<dbReference type="GO" id="GO:1990756">
    <property type="term" value="F:ubiquitin-like ligase-substrate adaptor activity"/>
    <property type="evidence" value="ECO:0000314"/>
    <property type="project" value="PomBase"/>
</dbReference>
<dbReference type="GO" id="GO:1903467">
    <property type="term" value="P:negative regulation of mitotic DNA replication initiation"/>
    <property type="evidence" value="ECO:0000315"/>
    <property type="project" value="PomBase"/>
</dbReference>
<dbReference type="GO" id="GO:0000209">
    <property type="term" value="P:protein polyubiquitination"/>
    <property type="evidence" value="ECO:0000318"/>
    <property type="project" value="GO_Central"/>
</dbReference>
<dbReference type="GO" id="GO:0031146">
    <property type="term" value="P:SCF-dependent proteasomal ubiquitin-dependent protein catabolic process"/>
    <property type="evidence" value="ECO:0000266"/>
    <property type="project" value="PomBase"/>
</dbReference>
<dbReference type="CDD" id="cd00200">
    <property type="entry name" value="WD40"/>
    <property type="match status" value="1"/>
</dbReference>
<dbReference type="FunFam" id="2.130.10.10:FF:001079">
    <property type="entry name" value="Cell division control protein 4"/>
    <property type="match status" value="1"/>
</dbReference>
<dbReference type="FunFam" id="1.20.1280.50:FF:000116">
    <property type="entry name" value="SCF ubiquitin ligase complex subunit"/>
    <property type="match status" value="1"/>
</dbReference>
<dbReference type="Gene3D" id="1.20.1280.50">
    <property type="match status" value="1"/>
</dbReference>
<dbReference type="Gene3D" id="2.130.10.10">
    <property type="entry name" value="YVTN repeat-like/Quinoprotein amine dehydrogenase"/>
    <property type="match status" value="1"/>
</dbReference>
<dbReference type="InterPro" id="IPR036047">
    <property type="entry name" value="F-box-like_dom_sf"/>
</dbReference>
<dbReference type="InterPro" id="IPR001810">
    <property type="entry name" value="F-box_dom"/>
</dbReference>
<dbReference type="InterPro" id="IPR020472">
    <property type="entry name" value="G-protein_beta_WD-40_rep"/>
</dbReference>
<dbReference type="InterPro" id="IPR015943">
    <property type="entry name" value="WD40/YVTN_repeat-like_dom_sf"/>
</dbReference>
<dbReference type="InterPro" id="IPR019775">
    <property type="entry name" value="WD40_repeat_CS"/>
</dbReference>
<dbReference type="InterPro" id="IPR036322">
    <property type="entry name" value="WD40_repeat_dom_sf"/>
</dbReference>
<dbReference type="InterPro" id="IPR001680">
    <property type="entry name" value="WD40_rpt"/>
</dbReference>
<dbReference type="PANTHER" id="PTHR22847:SF637">
    <property type="entry name" value="WD REPEAT DOMAIN 5B"/>
    <property type="match status" value="1"/>
</dbReference>
<dbReference type="PANTHER" id="PTHR22847">
    <property type="entry name" value="WD40 REPEAT PROTEIN"/>
    <property type="match status" value="1"/>
</dbReference>
<dbReference type="Pfam" id="PF00646">
    <property type="entry name" value="F-box"/>
    <property type="match status" value="1"/>
</dbReference>
<dbReference type="Pfam" id="PF00400">
    <property type="entry name" value="WD40"/>
    <property type="match status" value="6"/>
</dbReference>
<dbReference type="PRINTS" id="PR00320">
    <property type="entry name" value="GPROTEINBRPT"/>
</dbReference>
<dbReference type="SMART" id="SM00256">
    <property type="entry name" value="FBOX"/>
    <property type="match status" value="1"/>
</dbReference>
<dbReference type="SMART" id="SM00320">
    <property type="entry name" value="WD40"/>
    <property type="match status" value="7"/>
</dbReference>
<dbReference type="SUPFAM" id="SSF81383">
    <property type="entry name" value="F-box domain"/>
    <property type="match status" value="1"/>
</dbReference>
<dbReference type="SUPFAM" id="SSF50978">
    <property type="entry name" value="WD40 repeat-like"/>
    <property type="match status" value="1"/>
</dbReference>
<dbReference type="PROSITE" id="PS50181">
    <property type="entry name" value="FBOX"/>
    <property type="match status" value="1"/>
</dbReference>
<dbReference type="PROSITE" id="PS00678">
    <property type="entry name" value="WD_REPEATS_1"/>
    <property type="match status" value="3"/>
</dbReference>
<dbReference type="PROSITE" id="PS50082">
    <property type="entry name" value="WD_REPEATS_2"/>
    <property type="match status" value="6"/>
</dbReference>
<dbReference type="PROSITE" id="PS50294">
    <property type="entry name" value="WD_REPEATS_REGION"/>
    <property type="match status" value="1"/>
</dbReference>
<protein>
    <recommendedName>
        <fullName>WD repeat-containing protein pop2</fullName>
    </recommendedName>
    <alternativeName>
        <fullName>Proteolysis factor sud1</fullName>
    </alternativeName>
</protein>
<evidence type="ECO:0000255" key="1">
    <source>
        <dbReference type="PROSITE-ProRule" id="PRU00080"/>
    </source>
</evidence>
<evidence type="ECO:0000256" key="2">
    <source>
        <dbReference type="SAM" id="MobiDB-lite"/>
    </source>
</evidence>
<evidence type="ECO:0000269" key="3">
    <source>
    </source>
</evidence>
<evidence type="ECO:0000269" key="4">
    <source>
    </source>
</evidence>
<evidence type="ECO:0000269" key="5">
    <source>
    </source>
</evidence>
<evidence type="ECO:0000269" key="6">
    <source>
    </source>
</evidence>
<proteinExistence type="evidence at protein level"/>
<organism>
    <name type="scientific">Schizosaccharomyces pombe (strain 972 / ATCC 24843)</name>
    <name type="common">Fission yeast</name>
    <dbReference type="NCBI Taxonomy" id="284812"/>
    <lineage>
        <taxon>Eukaryota</taxon>
        <taxon>Fungi</taxon>
        <taxon>Dikarya</taxon>
        <taxon>Ascomycota</taxon>
        <taxon>Taphrinomycotina</taxon>
        <taxon>Schizosaccharomycetes</taxon>
        <taxon>Schizosaccharomycetales</taxon>
        <taxon>Schizosaccharomycetaceae</taxon>
        <taxon>Schizosaccharomyces</taxon>
    </lineage>
</organism>
<keyword id="KW-0963">Cytoplasm</keyword>
<keyword id="KW-0539">Nucleus</keyword>
<keyword id="KW-1185">Reference proteome</keyword>
<keyword id="KW-0677">Repeat</keyword>
<keyword id="KW-0833">Ubl conjugation pathway</keyword>
<keyword id="KW-0853">WD repeat</keyword>
<reference key="1">
    <citation type="journal article" date="1999" name="Curr. Biol.">
        <title>F-box/WD-repeat proteins pop1p and Sud1p/Pop2p form complexes that bind and direct the proteolysis of cdc18p.</title>
        <authorList>
            <person name="Wolf D.A."/>
            <person name="McKeon F."/>
            <person name="Jackson P.K."/>
        </authorList>
    </citation>
    <scope>NUCLEOTIDE SEQUENCE [MRNA]</scope>
    <scope>INTERACTION WITH POP1 AND CDC18</scope>
    <source>
        <strain>972 / ATCC 24843</strain>
    </source>
</reference>
<reference key="2">
    <citation type="journal article" date="1998" name="Proc. Natl. Acad. Sci. U.S.A.">
        <title>sud1+ targets cyclin-dependent kinase-phosphorylated Cdc18 and Rum1 proteins for degradation and stops unwanted diploidization in fission yeast.</title>
        <authorList>
            <person name="Jallepalli P.V."/>
            <person name="Tien D."/>
            <person name="Kelly T.J."/>
        </authorList>
    </citation>
    <scope>NUCLEOTIDE SEQUENCE [GENOMIC DNA]</scope>
    <scope>FUNCTION</scope>
    <scope>INTERACTION WITH CDC18</scope>
</reference>
<reference key="3">
    <citation type="journal article" date="2002" name="Nature">
        <title>The genome sequence of Schizosaccharomyces pombe.</title>
        <authorList>
            <person name="Wood V."/>
            <person name="Gwilliam R."/>
            <person name="Rajandream M.A."/>
            <person name="Lyne M.H."/>
            <person name="Lyne R."/>
            <person name="Stewart A."/>
            <person name="Sgouros J.G."/>
            <person name="Peat N."/>
            <person name="Hayles J."/>
            <person name="Baker S.G."/>
            <person name="Basham D."/>
            <person name="Bowman S."/>
            <person name="Brooks K."/>
            <person name="Brown D."/>
            <person name="Brown S."/>
            <person name="Chillingworth T."/>
            <person name="Churcher C.M."/>
            <person name="Collins M."/>
            <person name="Connor R."/>
            <person name="Cronin A."/>
            <person name="Davis P."/>
            <person name="Feltwell T."/>
            <person name="Fraser A."/>
            <person name="Gentles S."/>
            <person name="Goble A."/>
            <person name="Hamlin N."/>
            <person name="Harris D.E."/>
            <person name="Hidalgo J."/>
            <person name="Hodgson G."/>
            <person name="Holroyd S."/>
            <person name="Hornsby T."/>
            <person name="Howarth S."/>
            <person name="Huckle E.J."/>
            <person name="Hunt S."/>
            <person name="Jagels K."/>
            <person name="James K.D."/>
            <person name="Jones L."/>
            <person name="Jones M."/>
            <person name="Leather S."/>
            <person name="McDonald S."/>
            <person name="McLean J."/>
            <person name="Mooney P."/>
            <person name="Moule S."/>
            <person name="Mungall K.L."/>
            <person name="Murphy L.D."/>
            <person name="Niblett D."/>
            <person name="Odell C."/>
            <person name="Oliver K."/>
            <person name="O'Neil S."/>
            <person name="Pearson D."/>
            <person name="Quail M.A."/>
            <person name="Rabbinowitsch E."/>
            <person name="Rutherford K.M."/>
            <person name="Rutter S."/>
            <person name="Saunders D."/>
            <person name="Seeger K."/>
            <person name="Sharp S."/>
            <person name="Skelton J."/>
            <person name="Simmonds M.N."/>
            <person name="Squares R."/>
            <person name="Squares S."/>
            <person name="Stevens K."/>
            <person name="Taylor K."/>
            <person name="Taylor R.G."/>
            <person name="Tivey A."/>
            <person name="Walsh S.V."/>
            <person name="Warren T."/>
            <person name="Whitehead S."/>
            <person name="Woodward J.R."/>
            <person name="Volckaert G."/>
            <person name="Aert R."/>
            <person name="Robben J."/>
            <person name="Grymonprez B."/>
            <person name="Weltjens I."/>
            <person name="Vanstreels E."/>
            <person name="Rieger M."/>
            <person name="Schaefer M."/>
            <person name="Mueller-Auer S."/>
            <person name="Gabel C."/>
            <person name="Fuchs M."/>
            <person name="Duesterhoeft A."/>
            <person name="Fritzc C."/>
            <person name="Holzer E."/>
            <person name="Moestl D."/>
            <person name="Hilbert H."/>
            <person name="Borzym K."/>
            <person name="Langer I."/>
            <person name="Beck A."/>
            <person name="Lehrach H."/>
            <person name="Reinhardt R."/>
            <person name="Pohl T.M."/>
            <person name="Eger P."/>
            <person name="Zimmermann W."/>
            <person name="Wedler H."/>
            <person name="Wambutt R."/>
            <person name="Purnelle B."/>
            <person name="Goffeau A."/>
            <person name="Cadieu E."/>
            <person name="Dreano S."/>
            <person name="Gloux S."/>
            <person name="Lelaure V."/>
            <person name="Mottier S."/>
            <person name="Galibert F."/>
            <person name="Aves S.J."/>
            <person name="Xiang Z."/>
            <person name="Hunt C."/>
            <person name="Moore K."/>
            <person name="Hurst S.M."/>
            <person name="Lucas M."/>
            <person name="Rochet M."/>
            <person name="Gaillardin C."/>
            <person name="Tallada V.A."/>
            <person name="Garzon A."/>
            <person name="Thode G."/>
            <person name="Daga R.R."/>
            <person name="Cruzado L."/>
            <person name="Jimenez J."/>
            <person name="Sanchez M."/>
            <person name="del Rey F."/>
            <person name="Benito J."/>
            <person name="Dominguez A."/>
            <person name="Revuelta J.L."/>
            <person name="Moreno S."/>
            <person name="Armstrong J."/>
            <person name="Forsburg S.L."/>
            <person name="Cerutti L."/>
            <person name="Lowe T."/>
            <person name="McCombie W.R."/>
            <person name="Paulsen I."/>
            <person name="Potashkin J."/>
            <person name="Shpakovski G.V."/>
            <person name="Ussery D."/>
            <person name="Barrell B.G."/>
            <person name="Nurse P."/>
        </authorList>
    </citation>
    <scope>NUCLEOTIDE SEQUENCE [LARGE SCALE GENOMIC DNA]</scope>
    <source>
        <strain>972 / ATCC 24843</strain>
    </source>
</reference>
<reference key="4">
    <citation type="journal article" date="1998" name="Genes Cells">
        <title>Two F-box/WD-repeat proteins Pop1 and Pop2 form hetero- and homo-complexes together with cullin-1 in fission yeast SCF (Skip-cullin-1-F-box) ubiquitin ligase.</title>
        <authorList>
            <person name="Kominami K."/>
            <person name="Ochotorena I."/>
            <person name="Toda T."/>
        </authorList>
    </citation>
    <scope>FUNCTION</scope>
    <scope>SUBUNIT</scope>
    <source>
        <strain>972 / ATCC 24843</strain>
    </source>
</reference>
<reference key="5">
    <citation type="journal article" date="2002" name="BMC Biochem.">
        <title>Combinatorial diversity of fission yeast SCF ubiquitin ligases by homo- and heterooligomeric assemblies of the F-box proteins Pop1p and Pop2p.</title>
        <authorList>
            <person name="Seibert V."/>
            <person name="Prohl C."/>
            <person name="Schoultz I."/>
            <person name="Rhee E."/>
            <person name="Lopez R."/>
            <person name="Abderazzaq K."/>
            <person name="Zhou C."/>
            <person name="Wolf D.A."/>
        </authorList>
    </citation>
    <scope>FUNCTION</scope>
    <scope>SUBUNIT</scope>
    <scope>SUBCELLULAR LOCATION</scope>
</reference>
<reference key="6">
    <citation type="journal article" date="2004" name="J. Biol. Chem.">
        <title>Requirement of the SCFPop1/Pop2 ubiquitin ligase for degradation of the fission yeast S phase cyclin Cig2.</title>
        <authorList>
            <person name="Yamano H."/>
            <person name="Kominami K."/>
            <person name="Harrison C."/>
            <person name="Kitamura K."/>
            <person name="Katayama S."/>
            <person name="Dhut S."/>
            <person name="Hunt T."/>
            <person name="Toda T."/>
        </authorList>
    </citation>
    <scope>FUNCTION</scope>
</reference>
<name>POP2_SCHPO</name>
<feature type="chain" id="PRO_0000051140" description="WD repeat-containing protein pop2">
    <location>
        <begin position="1"/>
        <end position="703"/>
    </location>
</feature>
<feature type="domain" description="F-box" evidence="1">
    <location>
        <begin position="236"/>
        <end position="283"/>
    </location>
</feature>
<feature type="repeat" description="WD 1">
    <location>
        <begin position="389"/>
        <end position="417"/>
    </location>
</feature>
<feature type="repeat" description="WD 2">
    <location>
        <begin position="429"/>
        <end position="473"/>
    </location>
</feature>
<feature type="repeat" description="WD 3">
    <location>
        <begin position="505"/>
        <end position="533"/>
    </location>
</feature>
<feature type="repeat" description="WD 4">
    <location>
        <begin position="545"/>
        <end position="575"/>
    </location>
</feature>
<feature type="repeat" description="WD 5">
    <location>
        <begin position="587"/>
        <end position="615"/>
    </location>
</feature>
<feature type="repeat" description="WD 6">
    <location>
        <begin position="625"/>
        <end position="654"/>
    </location>
</feature>
<feature type="region of interest" description="Interaction with pop1">
    <location>
        <begin position="1"/>
        <end position="170"/>
    </location>
</feature>
<feature type="region of interest" description="Disordered" evidence="2">
    <location>
        <begin position="1"/>
        <end position="73"/>
    </location>
</feature>
<feature type="region of interest" description="Disordered" evidence="2">
    <location>
        <begin position="156"/>
        <end position="180"/>
    </location>
</feature>
<feature type="compositionally biased region" description="Polar residues" evidence="2">
    <location>
        <begin position="1"/>
        <end position="27"/>
    </location>
</feature>
<feature type="compositionally biased region" description="Polar residues" evidence="2">
    <location>
        <begin position="63"/>
        <end position="73"/>
    </location>
</feature>
<feature type="compositionally biased region" description="Polar residues" evidence="2">
    <location>
        <begin position="156"/>
        <end position="178"/>
    </location>
</feature>
<accession>O14170</accession>